<feature type="chain" id="PRO_0000104938" description="DNA-binding protein HU-alpha">
    <location>
        <begin position="1"/>
        <end position="90"/>
    </location>
</feature>
<keyword id="KW-0226">DNA condensation</keyword>
<keyword id="KW-0238">DNA-binding</keyword>
<keyword id="KW-1185">Reference proteome</keyword>
<accession>P0ACF3</accession>
<accession>P02342</accession>
<comment type="function">
    <text evidence="1">Histone-like DNA-binding protein which is capable of wrapping DNA to stabilize it, and thus to prevent its denaturation under extreme environmental conditions.</text>
</comment>
<comment type="subunit">
    <text evidence="1">Heterodimer of an alpha and a beta chain.</text>
</comment>
<comment type="similarity">
    <text evidence="2">Belongs to the bacterial histone-like protein family.</text>
</comment>
<protein>
    <recommendedName>
        <fullName>DNA-binding protein HU-alpha</fullName>
    </recommendedName>
    <alternativeName>
        <fullName>HU-2</fullName>
    </alternativeName>
    <alternativeName>
        <fullName>NS2</fullName>
    </alternativeName>
</protein>
<gene>
    <name type="primary">hupA</name>
    <name type="ordered locus">SF4072</name>
    <name type="ordered locus">S3663</name>
</gene>
<proteinExistence type="inferred from homology"/>
<name>DBHA_SHIFL</name>
<reference key="1">
    <citation type="journal article" date="2002" name="Nucleic Acids Res.">
        <title>Genome sequence of Shigella flexneri 2a: insights into pathogenicity through comparison with genomes of Escherichia coli K12 and O157.</title>
        <authorList>
            <person name="Jin Q."/>
            <person name="Yuan Z."/>
            <person name="Xu J."/>
            <person name="Wang Y."/>
            <person name="Shen Y."/>
            <person name="Lu W."/>
            <person name="Wang J."/>
            <person name="Liu H."/>
            <person name="Yang J."/>
            <person name="Yang F."/>
            <person name="Zhang X."/>
            <person name="Zhang J."/>
            <person name="Yang G."/>
            <person name="Wu H."/>
            <person name="Qu D."/>
            <person name="Dong J."/>
            <person name="Sun L."/>
            <person name="Xue Y."/>
            <person name="Zhao A."/>
            <person name="Gao Y."/>
            <person name="Zhu J."/>
            <person name="Kan B."/>
            <person name="Ding K."/>
            <person name="Chen S."/>
            <person name="Cheng H."/>
            <person name="Yao Z."/>
            <person name="He B."/>
            <person name="Chen R."/>
            <person name="Ma D."/>
            <person name="Qiang B."/>
            <person name="Wen Y."/>
            <person name="Hou Y."/>
            <person name="Yu J."/>
        </authorList>
    </citation>
    <scope>NUCLEOTIDE SEQUENCE [LARGE SCALE GENOMIC DNA]</scope>
    <source>
        <strain>301 / Serotype 2a</strain>
    </source>
</reference>
<reference key="2">
    <citation type="journal article" date="2003" name="Infect. Immun.">
        <title>Complete genome sequence and comparative genomics of Shigella flexneri serotype 2a strain 2457T.</title>
        <authorList>
            <person name="Wei J."/>
            <person name="Goldberg M.B."/>
            <person name="Burland V."/>
            <person name="Venkatesan M.M."/>
            <person name="Deng W."/>
            <person name="Fournier G."/>
            <person name="Mayhew G.F."/>
            <person name="Plunkett G. III"/>
            <person name="Rose D.J."/>
            <person name="Darling A."/>
            <person name="Mau B."/>
            <person name="Perna N.T."/>
            <person name="Payne S.M."/>
            <person name="Runyen-Janecky L.J."/>
            <person name="Zhou S."/>
            <person name="Schwartz D.C."/>
            <person name="Blattner F.R."/>
        </authorList>
    </citation>
    <scope>NUCLEOTIDE SEQUENCE [LARGE SCALE GENOMIC DNA]</scope>
    <source>
        <strain>ATCC 700930 / 2457T / Serotype 2a</strain>
    </source>
</reference>
<sequence length="90" mass="9535">MNKTQLIDVIAEKAELSKTQAKAALESTLAAITESLKEGDAVQLVGFGTFKVNHRAERTGRNPQTGKEIKIAAANVPAFVSGKALKDAVK</sequence>
<evidence type="ECO:0000250" key="1"/>
<evidence type="ECO:0000305" key="2"/>
<dbReference type="EMBL" id="AE005674">
    <property type="protein sequence ID" value="AAN45501.1"/>
    <property type="molecule type" value="Genomic_DNA"/>
</dbReference>
<dbReference type="EMBL" id="AE014073">
    <property type="protein sequence ID" value="AAP18700.1"/>
    <property type="molecule type" value="Genomic_DNA"/>
</dbReference>
<dbReference type="RefSeq" id="NP_709794.1">
    <property type="nucleotide sequence ID" value="NC_004337.2"/>
</dbReference>
<dbReference type="RefSeq" id="WP_001044513.1">
    <property type="nucleotide sequence ID" value="NZ_WPGW01000040.1"/>
</dbReference>
<dbReference type="SMR" id="P0ACF3"/>
<dbReference type="STRING" id="198214.SF4072"/>
<dbReference type="PaxDb" id="198214-SF4072"/>
<dbReference type="GeneID" id="1027571"/>
<dbReference type="GeneID" id="93777894"/>
<dbReference type="KEGG" id="sfl:SF4072"/>
<dbReference type="KEGG" id="sfx:S3663"/>
<dbReference type="PATRIC" id="fig|198214.7.peg.4796"/>
<dbReference type="HOGENOM" id="CLU_105066_3_1_6"/>
<dbReference type="Proteomes" id="UP000001006">
    <property type="component" value="Chromosome"/>
</dbReference>
<dbReference type="Proteomes" id="UP000002673">
    <property type="component" value="Chromosome"/>
</dbReference>
<dbReference type="GO" id="GO:0005829">
    <property type="term" value="C:cytosol"/>
    <property type="evidence" value="ECO:0007669"/>
    <property type="project" value="TreeGrafter"/>
</dbReference>
<dbReference type="GO" id="GO:0003677">
    <property type="term" value="F:DNA binding"/>
    <property type="evidence" value="ECO:0007669"/>
    <property type="project" value="UniProtKB-KW"/>
</dbReference>
<dbReference type="GO" id="GO:0030527">
    <property type="term" value="F:structural constituent of chromatin"/>
    <property type="evidence" value="ECO:0007669"/>
    <property type="project" value="InterPro"/>
</dbReference>
<dbReference type="GO" id="GO:0030261">
    <property type="term" value="P:chromosome condensation"/>
    <property type="evidence" value="ECO:0007669"/>
    <property type="project" value="UniProtKB-KW"/>
</dbReference>
<dbReference type="CDD" id="cd13831">
    <property type="entry name" value="HU"/>
    <property type="match status" value="1"/>
</dbReference>
<dbReference type="FunFam" id="4.10.520.10:FF:000001">
    <property type="entry name" value="DNA-binding protein HU"/>
    <property type="match status" value="1"/>
</dbReference>
<dbReference type="Gene3D" id="4.10.520.10">
    <property type="entry name" value="IHF-like DNA-binding proteins"/>
    <property type="match status" value="1"/>
</dbReference>
<dbReference type="InterPro" id="IPR000119">
    <property type="entry name" value="Hist_DNA-bd"/>
</dbReference>
<dbReference type="InterPro" id="IPR020816">
    <property type="entry name" value="Histone-like_DNA-bd_CS"/>
</dbReference>
<dbReference type="InterPro" id="IPR010992">
    <property type="entry name" value="IHF-like_DNA-bd_dom_sf"/>
</dbReference>
<dbReference type="NCBIfam" id="NF008023">
    <property type="entry name" value="PRK10753.1"/>
    <property type="match status" value="1"/>
</dbReference>
<dbReference type="PANTHER" id="PTHR33175">
    <property type="entry name" value="DNA-BINDING PROTEIN HU"/>
    <property type="match status" value="1"/>
</dbReference>
<dbReference type="PANTHER" id="PTHR33175:SF12">
    <property type="entry name" value="DNA-BINDING PROTEIN HU-ALPHA"/>
    <property type="match status" value="1"/>
</dbReference>
<dbReference type="Pfam" id="PF00216">
    <property type="entry name" value="Bac_DNA_binding"/>
    <property type="match status" value="1"/>
</dbReference>
<dbReference type="PRINTS" id="PR01727">
    <property type="entry name" value="DNABINDINGHU"/>
</dbReference>
<dbReference type="SMART" id="SM00411">
    <property type="entry name" value="BHL"/>
    <property type="match status" value="1"/>
</dbReference>
<dbReference type="SUPFAM" id="SSF47729">
    <property type="entry name" value="IHF-like DNA-binding proteins"/>
    <property type="match status" value="1"/>
</dbReference>
<dbReference type="PROSITE" id="PS00045">
    <property type="entry name" value="HISTONE_LIKE"/>
    <property type="match status" value="1"/>
</dbReference>
<organism>
    <name type="scientific">Shigella flexneri</name>
    <dbReference type="NCBI Taxonomy" id="623"/>
    <lineage>
        <taxon>Bacteria</taxon>
        <taxon>Pseudomonadati</taxon>
        <taxon>Pseudomonadota</taxon>
        <taxon>Gammaproteobacteria</taxon>
        <taxon>Enterobacterales</taxon>
        <taxon>Enterobacteriaceae</taxon>
        <taxon>Shigella</taxon>
    </lineage>
</organism>